<feature type="chain" id="PRO_0000162995" description="NADPH-dependent 7-cyano-7-deazaguanine reductase">
    <location>
        <begin position="1"/>
        <end position="166"/>
    </location>
</feature>
<feature type="active site" description="Thioimide intermediate" evidence="1">
    <location>
        <position position="57"/>
    </location>
</feature>
<feature type="active site" description="Proton donor" evidence="1">
    <location>
        <position position="64"/>
    </location>
</feature>
<feature type="binding site" evidence="1">
    <location>
        <begin position="79"/>
        <end position="81"/>
    </location>
    <ligand>
        <name>substrate</name>
    </ligand>
</feature>
<feature type="binding site" evidence="1">
    <location>
        <begin position="98"/>
        <end position="99"/>
    </location>
    <ligand>
        <name>substrate</name>
    </ligand>
</feature>
<keyword id="KW-0963">Cytoplasm</keyword>
<keyword id="KW-0521">NADP</keyword>
<keyword id="KW-0560">Oxidoreductase</keyword>
<keyword id="KW-0671">Queuosine biosynthesis</keyword>
<accession>Q6GIR3</accession>
<organism>
    <name type="scientific">Staphylococcus aureus (strain MRSA252)</name>
    <dbReference type="NCBI Taxonomy" id="282458"/>
    <lineage>
        <taxon>Bacteria</taxon>
        <taxon>Bacillati</taxon>
        <taxon>Bacillota</taxon>
        <taxon>Bacilli</taxon>
        <taxon>Bacillales</taxon>
        <taxon>Staphylococcaceae</taxon>
        <taxon>Staphylococcus</taxon>
    </lineage>
</organism>
<protein>
    <recommendedName>
        <fullName evidence="1">NADPH-dependent 7-cyano-7-deazaguanine reductase</fullName>
        <ecNumber evidence="1">1.7.1.13</ecNumber>
    </recommendedName>
    <alternativeName>
        <fullName evidence="1">7-cyano-7-carbaguanine reductase</fullName>
    </alternativeName>
    <alternativeName>
        <fullName evidence="1">NADPH-dependent nitrile oxidoreductase</fullName>
    </alternativeName>
    <alternativeName>
        <fullName evidence="1">PreQ(0) reductase</fullName>
    </alternativeName>
</protein>
<gene>
    <name evidence="1" type="primary">queF</name>
    <name type="ordered locus">SAR0782</name>
</gene>
<comment type="function">
    <text evidence="1">Catalyzes the NADPH-dependent reduction of 7-cyano-7-deazaguanine (preQ0) to 7-aminomethyl-7-deazaguanine (preQ1).</text>
</comment>
<comment type="catalytic activity">
    <reaction evidence="1">
        <text>7-aminomethyl-7-carbaguanine + 2 NADP(+) = 7-cyano-7-deazaguanine + 2 NADPH + 3 H(+)</text>
        <dbReference type="Rhea" id="RHEA:13409"/>
        <dbReference type="ChEBI" id="CHEBI:15378"/>
        <dbReference type="ChEBI" id="CHEBI:45075"/>
        <dbReference type="ChEBI" id="CHEBI:57783"/>
        <dbReference type="ChEBI" id="CHEBI:58349"/>
        <dbReference type="ChEBI" id="CHEBI:58703"/>
        <dbReference type="EC" id="1.7.1.13"/>
    </reaction>
</comment>
<comment type="pathway">
    <text evidence="1">tRNA modification; tRNA-queuosine biosynthesis.</text>
</comment>
<comment type="subcellular location">
    <subcellularLocation>
        <location evidence="1">Cytoplasm</location>
    </subcellularLocation>
</comment>
<comment type="similarity">
    <text evidence="1">Belongs to the GTP cyclohydrolase I family. QueF type 1 subfamily.</text>
</comment>
<evidence type="ECO:0000255" key="1">
    <source>
        <dbReference type="HAMAP-Rule" id="MF_00818"/>
    </source>
</evidence>
<name>QUEF_STAAR</name>
<dbReference type="EC" id="1.7.1.13" evidence="1"/>
<dbReference type="EMBL" id="BX571856">
    <property type="protein sequence ID" value="CAG39792.1"/>
    <property type="molecule type" value="Genomic_DNA"/>
</dbReference>
<dbReference type="RefSeq" id="WP_000930016.1">
    <property type="nucleotide sequence ID" value="NC_002952.2"/>
</dbReference>
<dbReference type="SMR" id="Q6GIR3"/>
<dbReference type="KEGG" id="sar:SAR0782"/>
<dbReference type="HOGENOM" id="CLU_102489_0_1_9"/>
<dbReference type="UniPathway" id="UPA00392"/>
<dbReference type="Proteomes" id="UP000000596">
    <property type="component" value="Chromosome"/>
</dbReference>
<dbReference type="GO" id="GO:0005737">
    <property type="term" value="C:cytoplasm"/>
    <property type="evidence" value="ECO:0007669"/>
    <property type="project" value="UniProtKB-SubCell"/>
</dbReference>
<dbReference type="GO" id="GO:0033739">
    <property type="term" value="F:preQ1 synthase activity"/>
    <property type="evidence" value="ECO:0007669"/>
    <property type="project" value="UniProtKB-UniRule"/>
</dbReference>
<dbReference type="GO" id="GO:0008616">
    <property type="term" value="P:queuosine biosynthetic process"/>
    <property type="evidence" value="ECO:0007669"/>
    <property type="project" value="UniProtKB-UniRule"/>
</dbReference>
<dbReference type="GO" id="GO:0006400">
    <property type="term" value="P:tRNA modification"/>
    <property type="evidence" value="ECO:0007669"/>
    <property type="project" value="UniProtKB-UniRule"/>
</dbReference>
<dbReference type="Gene3D" id="3.30.1130.10">
    <property type="match status" value="1"/>
</dbReference>
<dbReference type="HAMAP" id="MF_00818">
    <property type="entry name" value="QueF_type1"/>
    <property type="match status" value="1"/>
</dbReference>
<dbReference type="InterPro" id="IPR043133">
    <property type="entry name" value="GTP-CH-I_C/QueF"/>
</dbReference>
<dbReference type="InterPro" id="IPR050084">
    <property type="entry name" value="NADPH_dep_7-cyano-7-deazaG_red"/>
</dbReference>
<dbReference type="InterPro" id="IPR029500">
    <property type="entry name" value="QueF"/>
</dbReference>
<dbReference type="InterPro" id="IPR016856">
    <property type="entry name" value="QueF_type1"/>
</dbReference>
<dbReference type="NCBIfam" id="TIGR03139">
    <property type="entry name" value="QueF-II"/>
    <property type="match status" value="1"/>
</dbReference>
<dbReference type="PANTHER" id="PTHR34354">
    <property type="entry name" value="NADPH-DEPENDENT 7-CYANO-7-DEAZAGUANINE REDUCTASE"/>
    <property type="match status" value="1"/>
</dbReference>
<dbReference type="PANTHER" id="PTHR34354:SF1">
    <property type="entry name" value="NADPH-DEPENDENT 7-CYANO-7-DEAZAGUANINE REDUCTASE"/>
    <property type="match status" value="1"/>
</dbReference>
<dbReference type="Pfam" id="PF14489">
    <property type="entry name" value="QueF"/>
    <property type="match status" value="1"/>
</dbReference>
<dbReference type="PIRSF" id="PIRSF027377">
    <property type="entry name" value="Nitrile_oxidored_QueF"/>
    <property type="match status" value="1"/>
</dbReference>
<dbReference type="SUPFAM" id="SSF55620">
    <property type="entry name" value="Tetrahydrobiopterin biosynthesis enzymes-like"/>
    <property type="match status" value="1"/>
</dbReference>
<reference key="1">
    <citation type="journal article" date="2004" name="Proc. Natl. Acad. Sci. U.S.A.">
        <title>Complete genomes of two clinical Staphylococcus aureus strains: evidence for the rapid evolution of virulence and drug resistance.</title>
        <authorList>
            <person name="Holden M.T.G."/>
            <person name="Feil E.J."/>
            <person name="Lindsay J.A."/>
            <person name="Peacock S.J."/>
            <person name="Day N.P.J."/>
            <person name="Enright M.C."/>
            <person name="Foster T.J."/>
            <person name="Moore C.E."/>
            <person name="Hurst L."/>
            <person name="Atkin R."/>
            <person name="Barron A."/>
            <person name="Bason N."/>
            <person name="Bentley S.D."/>
            <person name="Chillingworth C."/>
            <person name="Chillingworth T."/>
            <person name="Churcher C."/>
            <person name="Clark L."/>
            <person name="Corton C."/>
            <person name="Cronin A."/>
            <person name="Doggett J."/>
            <person name="Dowd L."/>
            <person name="Feltwell T."/>
            <person name="Hance Z."/>
            <person name="Harris B."/>
            <person name="Hauser H."/>
            <person name="Holroyd S."/>
            <person name="Jagels K."/>
            <person name="James K.D."/>
            <person name="Lennard N."/>
            <person name="Line A."/>
            <person name="Mayes R."/>
            <person name="Moule S."/>
            <person name="Mungall K."/>
            <person name="Ormond D."/>
            <person name="Quail M.A."/>
            <person name="Rabbinowitsch E."/>
            <person name="Rutherford K.M."/>
            <person name="Sanders M."/>
            <person name="Sharp S."/>
            <person name="Simmonds M."/>
            <person name="Stevens K."/>
            <person name="Whitehead S."/>
            <person name="Barrell B.G."/>
            <person name="Spratt B.G."/>
            <person name="Parkhill J."/>
        </authorList>
    </citation>
    <scope>NUCLEOTIDE SEQUENCE [LARGE SCALE GENOMIC DNA]</scope>
    <source>
        <strain>MRSA252</strain>
    </source>
</reference>
<proteinExistence type="inferred from homology"/>
<sequence length="166" mass="19645">MAHGRQQDELQDITLLGNQDNTYNFDYRPDVLESFDNKHQGRDYFVKFNCPEFTSLCPITGQPDFATIYISYIPNVKMVESKSLKLYLFSFRNHGDFHEDCMNIIMNDLIELMDPHYIEVWGKFTPRGGISIDPYTNYGRPNSKYEQMAEHRLMNHDLYPEKIDNR</sequence>